<accession>Q6D1U1</accession>
<name>RL19_PECAS</name>
<organism>
    <name type="scientific">Pectobacterium atrosepticum (strain SCRI 1043 / ATCC BAA-672)</name>
    <name type="common">Erwinia carotovora subsp. atroseptica</name>
    <dbReference type="NCBI Taxonomy" id="218491"/>
    <lineage>
        <taxon>Bacteria</taxon>
        <taxon>Pseudomonadati</taxon>
        <taxon>Pseudomonadota</taxon>
        <taxon>Gammaproteobacteria</taxon>
        <taxon>Enterobacterales</taxon>
        <taxon>Pectobacteriaceae</taxon>
        <taxon>Pectobacterium</taxon>
    </lineage>
</organism>
<reference key="1">
    <citation type="journal article" date="2004" name="Proc. Natl. Acad. Sci. U.S.A.">
        <title>Genome sequence of the enterobacterial phytopathogen Erwinia carotovora subsp. atroseptica and characterization of virulence factors.</title>
        <authorList>
            <person name="Bell K.S."/>
            <person name="Sebaihia M."/>
            <person name="Pritchard L."/>
            <person name="Holden M.T.G."/>
            <person name="Hyman L.J."/>
            <person name="Holeva M.C."/>
            <person name="Thomson N.R."/>
            <person name="Bentley S.D."/>
            <person name="Churcher L.J.C."/>
            <person name="Mungall K."/>
            <person name="Atkin R."/>
            <person name="Bason N."/>
            <person name="Brooks K."/>
            <person name="Chillingworth T."/>
            <person name="Clark K."/>
            <person name="Doggett J."/>
            <person name="Fraser A."/>
            <person name="Hance Z."/>
            <person name="Hauser H."/>
            <person name="Jagels K."/>
            <person name="Moule S."/>
            <person name="Norbertczak H."/>
            <person name="Ormond D."/>
            <person name="Price C."/>
            <person name="Quail M.A."/>
            <person name="Sanders M."/>
            <person name="Walker D."/>
            <person name="Whitehead S."/>
            <person name="Salmond G.P.C."/>
            <person name="Birch P.R.J."/>
            <person name="Parkhill J."/>
            <person name="Toth I.K."/>
        </authorList>
    </citation>
    <scope>NUCLEOTIDE SEQUENCE [LARGE SCALE GENOMIC DNA]</scope>
    <source>
        <strain>SCRI 1043 / ATCC BAA-672</strain>
    </source>
</reference>
<protein>
    <recommendedName>
        <fullName evidence="1">Large ribosomal subunit protein bL19</fullName>
    </recommendedName>
    <alternativeName>
        <fullName evidence="2">50S ribosomal protein L19</fullName>
    </alternativeName>
</protein>
<comment type="function">
    <text evidence="1">This protein is located at the 30S-50S ribosomal subunit interface and may play a role in the structure and function of the aminoacyl-tRNA binding site.</text>
</comment>
<comment type="similarity">
    <text evidence="1">Belongs to the bacterial ribosomal protein bL19 family.</text>
</comment>
<dbReference type="EMBL" id="BX950851">
    <property type="protein sequence ID" value="CAG76254.1"/>
    <property type="molecule type" value="Genomic_DNA"/>
</dbReference>
<dbReference type="RefSeq" id="WP_011094869.1">
    <property type="nucleotide sequence ID" value="NC_004547.2"/>
</dbReference>
<dbReference type="SMR" id="Q6D1U1"/>
<dbReference type="STRING" id="218491.ECA3356"/>
<dbReference type="GeneID" id="57210051"/>
<dbReference type="KEGG" id="eca:ECA3356"/>
<dbReference type="PATRIC" id="fig|218491.5.peg.3407"/>
<dbReference type="eggNOG" id="COG0335">
    <property type="taxonomic scope" value="Bacteria"/>
</dbReference>
<dbReference type="HOGENOM" id="CLU_103507_2_1_6"/>
<dbReference type="OrthoDB" id="9803541at2"/>
<dbReference type="Proteomes" id="UP000007966">
    <property type="component" value="Chromosome"/>
</dbReference>
<dbReference type="GO" id="GO:0022625">
    <property type="term" value="C:cytosolic large ribosomal subunit"/>
    <property type="evidence" value="ECO:0007669"/>
    <property type="project" value="TreeGrafter"/>
</dbReference>
<dbReference type="GO" id="GO:0003735">
    <property type="term" value="F:structural constituent of ribosome"/>
    <property type="evidence" value="ECO:0007669"/>
    <property type="project" value="InterPro"/>
</dbReference>
<dbReference type="GO" id="GO:0006412">
    <property type="term" value="P:translation"/>
    <property type="evidence" value="ECO:0007669"/>
    <property type="project" value="UniProtKB-UniRule"/>
</dbReference>
<dbReference type="FunFam" id="2.30.30.790:FF:000001">
    <property type="entry name" value="50S ribosomal protein L19"/>
    <property type="match status" value="1"/>
</dbReference>
<dbReference type="Gene3D" id="2.30.30.790">
    <property type="match status" value="1"/>
</dbReference>
<dbReference type="HAMAP" id="MF_00402">
    <property type="entry name" value="Ribosomal_bL19"/>
    <property type="match status" value="1"/>
</dbReference>
<dbReference type="InterPro" id="IPR001857">
    <property type="entry name" value="Ribosomal_bL19"/>
</dbReference>
<dbReference type="InterPro" id="IPR018257">
    <property type="entry name" value="Ribosomal_bL19_CS"/>
</dbReference>
<dbReference type="InterPro" id="IPR038657">
    <property type="entry name" value="Ribosomal_bL19_sf"/>
</dbReference>
<dbReference type="InterPro" id="IPR008991">
    <property type="entry name" value="Translation_prot_SH3-like_sf"/>
</dbReference>
<dbReference type="NCBIfam" id="TIGR01024">
    <property type="entry name" value="rplS_bact"/>
    <property type="match status" value="1"/>
</dbReference>
<dbReference type="PANTHER" id="PTHR15680:SF9">
    <property type="entry name" value="LARGE RIBOSOMAL SUBUNIT PROTEIN BL19M"/>
    <property type="match status" value="1"/>
</dbReference>
<dbReference type="PANTHER" id="PTHR15680">
    <property type="entry name" value="RIBOSOMAL PROTEIN L19"/>
    <property type="match status" value="1"/>
</dbReference>
<dbReference type="Pfam" id="PF01245">
    <property type="entry name" value="Ribosomal_L19"/>
    <property type="match status" value="1"/>
</dbReference>
<dbReference type="PIRSF" id="PIRSF002191">
    <property type="entry name" value="Ribosomal_L19"/>
    <property type="match status" value="1"/>
</dbReference>
<dbReference type="PRINTS" id="PR00061">
    <property type="entry name" value="RIBOSOMALL19"/>
</dbReference>
<dbReference type="SUPFAM" id="SSF50104">
    <property type="entry name" value="Translation proteins SH3-like domain"/>
    <property type="match status" value="1"/>
</dbReference>
<dbReference type="PROSITE" id="PS01015">
    <property type="entry name" value="RIBOSOMAL_L19"/>
    <property type="match status" value="1"/>
</dbReference>
<keyword id="KW-1185">Reference proteome</keyword>
<keyword id="KW-0687">Ribonucleoprotein</keyword>
<keyword id="KW-0689">Ribosomal protein</keyword>
<proteinExistence type="inferred from homology"/>
<feature type="chain" id="PRO_0000163455" description="Large ribosomal subunit protein bL19">
    <location>
        <begin position="1"/>
        <end position="115"/>
    </location>
</feature>
<sequence length="115" mass="13077">MSNIIKQIEDEQMKQDVPAFRPGDSVEVKVWVVEGSKKRLQAFEGVVIAIRNRGLHSAFTVRKISNGEGVERVFQTHSPVIDSIAVKRRGAVRKAKLYYLRERTGKSARIKERLS</sequence>
<evidence type="ECO:0000255" key="1">
    <source>
        <dbReference type="HAMAP-Rule" id="MF_00402"/>
    </source>
</evidence>
<evidence type="ECO:0000305" key="2"/>
<gene>
    <name evidence="1" type="primary">rplS</name>
    <name type="ordered locus">ECA3356</name>
</gene>